<keyword id="KW-0106">Calcium</keyword>
<keyword id="KW-0903">Direct protein sequencing</keyword>
<keyword id="KW-1015">Disulfide bond</keyword>
<keyword id="KW-0272">Extracellular matrix</keyword>
<keyword id="KW-0325">Glycoprotein</keyword>
<keyword id="KW-0456">Lyase</keyword>
<keyword id="KW-0479">Metal-binding</keyword>
<keyword id="KW-0677">Repeat</keyword>
<keyword id="KW-0964">Secreted</keyword>
<keyword id="KW-0732">Signal</keyword>
<keyword id="KW-0862">Zinc</keyword>
<dbReference type="EC" id="4.2.1.1"/>
<dbReference type="EMBL" id="AB032613">
    <property type="protein sequence ID" value="BAA90540.1"/>
    <property type="molecule type" value="mRNA"/>
</dbReference>
<dbReference type="PIR" id="JC7210">
    <property type="entry name" value="JC7210"/>
</dbReference>
<dbReference type="GO" id="GO:0005576">
    <property type="term" value="C:extracellular region"/>
    <property type="evidence" value="ECO:0007669"/>
    <property type="project" value="UniProtKB-KW"/>
</dbReference>
<dbReference type="GO" id="GO:0004089">
    <property type="term" value="F:carbonate dehydratase activity"/>
    <property type="evidence" value="ECO:0007669"/>
    <property type="project" value="UniProtKB-EC"/>
</dbReference>
<dbReference type="GO" id="GO:0008270">
    <property type="term" value="F:zinc ion binding"/>
    <property type="evidence" value="ECO:0007669"/>
    <property type="project" value="InterPro"/>
</dbReference>
<dbReference type="Gene3D" id="3.10.200.10">
    <property type="entry name" value="Alpha carbonic anhydrase"/>
    <property type="match status" value="2"/>
</dbReference>
<dbReference type="InterPro" id="IPR001148">
    <property type="entry name" value="CA_dom"/>
</dbReference>
<dbReference type="InterPro" id="IPR036398">
    <property type="entry name" value="CA_dom_sf"/>
</dbReference>
<dbReference type="InterPro" id="IPR023561">
    <property type="entry name" value="Carbonic_anhydrase_a-class"/>
</dbReference>
<dbReference type="PANTHER" id="PTHR18952">
    <property type="entry name" value="CARBONIC ANHYDRASE"/>
    <property type="match status" value="1"/>
</dbReference>
<dbReference type="PANTHER" id="PTHR18952:SF265">
    <property type="entry name" value="CARBONIC ANHYDRASE"/>
    <property type="match status" value="1"/>
</dbReference>
<dbReference type="Pfam" id="PF00194">
    <property type="entry name" value="Carb_anhydrase"/>
    <property type="match status" value="2"/>
</dbReference>
<dbReference type="SMART" id="SM01057">
    <property type="entry name" value="Carb_anhydrase"/>
    <property type="match status" value="1"/>
</dbReference>
<dbReference type="SUPFAM" id="SSF51069">
    <property type="entry name" value="Carbonic anhydrase"/>
    <property type="match status" value="1"/>
</dbReference>
<dbReference type="PROSITE" id="PS51144">
    <property type="entry name" value="ALPHA_CA_2"/>
    <property type="match status" value="1"/>
</dbReference>
<proteinExistence type="evidence at protein level"/>
<protein>
    <recommendedName>
        <fullName>N66 matrix protein</fullName>
        <ecNumber>4.2.1.1</ecNumber>
    </recommendedName>
</protein>
<sequence length="568" mass="62376">MWRMTTLLHLTALLVLIPLCHCASMHRHDHYMDMDQTYPNGLGYCEPSGESSCKAGFSYNRDICQGPYHWHTISSCYKACGHKRRQSPINIWSHKAVFLPYLPRLKFKPHMKSLDTDVTNHQNRAPEFEPEDGDKLHVKLKNLVDGHYKFHNLHIHNGKSRRKGSEHSVNRHFTPMEAHLVFHHDDKKEIKPPRVKLGGVYAGRNKFVVVGVFLEVGDEGYGDEPDDDECKRILKGHCENNGDNGNNCDNGNNGNNDNNGNNGNNGNGNNGYNGNNGDNGNNGNGNGNNGYNGNNGYNGNNGNNGNGNNDNNGNDNNGNNGGNGNNGNNGNGNNGNNGNGNNGNNGGNGNNGNNGNSNNGNNGNGNNGNNGGNGNNGNNGNGNNENNGNGSNGNNGGNGNNGNNGDNGNGDNGYNGDNGNSDGRLRRWDLANVRRMHAERYHFSGGCIVKKAKRLSRILECAYRHKKVREFKRNGEEKGLDVDITPEMVLPPMKYRHYYTYEGSLTTPPCNETVLWVVEKCHVQVSRRVLDALRNVEGYEDGTTLSKYGTRRPTQRNKHPLRVYKNSI</sequence>
<evidence type="ECO:0000250" key="1"/>
<evidence type="ECO:0000255" key="2"/>
<evidence type="ECO:0000255" key="3">
    <source>
        <dbReference type="PROSITE-ProRule" id="PRU01134"/>
    </source>
</evidence>
<evidence type="ECO:0000256" key="4">
    <source>
        <dbReference type="SAM" id="MobiDB-lite"/>
    </source>
</evidence>
<evidence type="ECO:0000269" key="5">
    <source>
    </source>
</evidence>
<evidence type="ECO:0000305" key="6"/>
<name>MA66_PINMA</name>
<organism>
    <name type="scientific">Pinctada maxima</name>
    <name type="common">Silver-lipped pearl oyster</name>
    <name type="synonym">White-lipped pearl oyster</name>
    <dbReference type="NCBI Taxonomy" id="104660"/>
    <lineage>
        <taxon>Eukaryota</taxon>
        <taxon>Metazoa</taxon>
        <taxon>Spiralia</taxon>
        <taxon>Lophotrochozoa</taxon>
        <taxon>Mollusca</taxon>
        <taxon>Bivalvia</taxon>
        <taxon>Autobranchia</taxon>
        <taxon>Pteriomorphia</taxon>
        <taxon>Pterioida</taxon>
        <taxon>Pterioidea</taxon>
        <taxon>Pteriidae</taxon>
        <taxon>Pinctada</taxon>
    </lineage>
</organism>
<comment type="function">
    <text evidence="1">Acts as a negative regulator for calcification in the shells of mollusks. May function both as a calcium concentrator and as a carbonic anhydrase required for production of carbonate ions, which are assembled to CaCO(3) at mineralization sites. Is important for shell formation in both the calcitic prismatic layer and the aragonitic nacreous layer (By similarity).</text>
</comment>
<comment type="catalytic activity">
    <reaction>
        <text>hydrogencarbonate + H(+) = CO2 + H2O</text>
        <dbReference type="Rhea" id="RHEA:10748"/>
        <dbReference type="ChEBI" id="CHEBI:15377"/>
        <dbReference type="ChEBI" id="CHEBI:15378"/>
        <dbReference type="ChEBI" id="CHEBI:16526"/>
        <dbReference type="ChEBI" id="CHEBI:17544"/>
        <dbReference type="EC" id="4.2.1.1"/>
    </reaction>
</comment>
<comment type="cofactor">
    <cofactor evidence="1">
        <name>Zn(2+)</name>
        <dbReference type="ChEBI" id="CHEBI:29105"/>
    </cofactor>
</comment>
<comment type="subunit">
    <text evidence="5">Homooligomer; disulfide-linked. May also be disulfide-linked to insoluble organic matrix.</text>
</comment>
<comment type="subcellular location">
    <subcellularLocation>
        <location evidence="5">Secreted</location>
        <location evidence="5">Extracellular space</location>
        <location evidence="5">Extracellular matrix</location>
    </subcellularLocation>
</comment>
<comment type="tissue specificity">
    <text evidence="5">Expressed in both the dorsal region of the mantle and the mantle edge. Is dispersed in calcium carbonate and also linked by disulfide bonds to the organic core of nacre.</text>
</comment>
<comment type="miscellaneous">
    <text>Sulfite and sialic acid may provide the necessary negative charge in the N-glycan to promote calcium uptake.</text>
</comment>
<comment type="similarity">
    <text evidence="6">Belongs to the alpha-carbonic anhydrase family.</text>
</comment>
<accession>Q9NL38</accession>
<feature type="signal peptide" evidence="5">
    <location>
        <begin position="1"/>
        <end position="22"/>
    </location>
</feature>
<feature type="chain" id="PRO_0000379791" description="N66 matrix protein">
    <location>
        <begin position="23"/>
        <end position="568"/>
    </location>
</feature>
<feature type="domain" description="Alpha-carbonic anhydrase" evidence="3">
    <location>
        <begin position="55"/>
        <end position="567"/>
    </location>
</feature>
<feature type="region of interest" description="Disordered" evidence="4">
    <location>
        <begin position="259"/>
        <end position="421"/>
    </location>
</feature>
<feature type="compositionally biased region" description="Gly residues" evidence="4">
    <location>
        <begin position="280"/>
        <end position="290"/>
    </location>
</feature>
<feature type="compositionally biased region" description="Low complexity" evidence="4">
    <location>
        <begin position="291"/>
        <end position="318"/>
    </location>
</feature>
<feature type="compositionally biased region" description="Gly residues" evidence="4">
    <location>
        <begin position="319"/>
        <end position="352"/>
    </location>
</feature>
<feature type="compositionally biased region" description="Gly residues" evidence="4">
    <location>
        <begin position="362"/>
        <end position="380"/>
    </location>
</feature>
<feature type="compositionally biased region" description="Gly residues" evidence="4">
    <location>
        <begin position="390"/>
        <end position="413"/>
    </location>
</feature>
<feature type="binding site" evidence="3">
    <location>
        <position position="154"/>
    </location>
    <ligand>
        <name>Zn(2+)</name>
        <dbReference type="ChEBI" id="CHEBI:29105"/>
        <note>catalytic</note>
    </ligand>
</feature>
<feature type="binding site" evidence="3">
    <location>
        <position position="156"/>
    </location>
    <ligand>
        <name>Zn(2+)</name>
        <dbReference type="ChEBI" id="CHEBI:29105"/>
        <note>catalytic</note>
    </ligand>
</feature>
<feature type="binding site" evidence="3">
    <location>
        <position position="179"/>
    </location>
    <ligand>
        <name>Zn(2+)</name>
        <dbReference type="ChEBI" id="CHEBI:29105"/>
        <note>catalytic</note>
    </ligand>
</feature>
<feature type="binding site" evidence="1">
    <location>
        <begin position="506"/>
        <end position="507"/>
    </location>
    <ligand>
        <name>substrate</name>
    </ligand>
</feature>
<feature type="glycosylation site" description="N-linked (GlcNAc...) asparagine" evidence="2">
    <location>
        <position position="389"/>
    </location>
</feature>
<feature type="glycosylation site" description="N-linked (GlcNAc...) asparagine" evidence="2">
    <location>
        <position position="511"/>
    </location>
</feature>
<feature type="sequence conflict" description="In Ref. 1; AA sequence." evidence="6" ref="1">
    <original>MDQT</original>
    <variation>GRQW</variation>
    <location>
        <begin position="34"/>
        <end position="37"/>
    </location>
</feature>
<reference key="1">
    <citation type="journal article" date="2000" name="Biochem. Biophys. Res. Commun.">
        <title>Molecular mechanism of the nacreous layer formation in Pinctada maxima.</title>
        <authorList>
            <person name="Kono M."/>
            <person name="Hayashi N."/>
            <person name="Samata T."/>
        </authorList>
    </citation>
    <scope>NUCLEOTIDE SEQUENCE [MRNA]</scope>
    <scope>PROTEIN SEQUENCE OF 23-39</scope>
    <scope>SUBUNIT</scope>
    <scope>SUBCELLULAR LOCATION</scope>
    <scope>TISSUE SPECIFICITY</scope>
    <source>
        <tissue>Mantle</tissue>
        <tissue>Nacre</tissue>
    </source>
</reference>